<reference key="1">
    <citation type="journal article" date="2001" name="Nucleic Acids Res.">
        <title>The complete genome sequence of the murine respiratory pathogen Mycoplasma pulmonis.</title>
        <authorList>
            <person name="Chambaud I."/>
            <person name="Heilig R."/>
            <person name="Ferris S."/>
            <person name="Barbe V."/>
            <person name="Samson D."/>
            <person name="Galisson F."/>
            <person name="Moszer I."/>
            <person name="Dybvig K."/>
            <person name="Wroblewski H."/>
            <person name="Viari A."/>
            <person name="Rocha E.P.C."/>
            <person name="Blanchard A."/>
        </authorList>
    </citation>
    <scope>NUCLEOTIDE SEQUENCE [LARGE SCALE GENOMIC DNA]</scope>
    <source>
        <strain>UAB CTIP</strain>
    </source>
</reference>
<keyword id="KW-1185">Reference proteome</keyword>
<keyword id="KW-0687">Ribonucleoprotein</keyword>
<keyword id="KW-0689">Ribosomal protein</keyword>
<keyword id="KW-0694">RNA-binding</keyword>
<keyword id="KW-0699">rRNA-binding</keyword>
<comment type="function">
    <text evidence="1">One of the primary rRNA binding proteins. Required for association of the 30S and 50S subunits to form the 70S ribosome, for tRNA binding and peptide bond formation. It has been suggested to have peptidyltransferase activity; this is somewhat controversial. Makes several contacts with the 16S rRNA in the 70S ribosome.</text>
</comment>
<comment type="subunit">
    <text evidence="1">Part of the 50S ribosomal subunit. Forms a bridge to the 30S subunit in the 70S ribosome.</text>
</comment>
<comment type="similarity">
    <text evidence="1">Belongs to the universal ribosomal protein uL2 family.</text>
</comment>
<accession>Q98PY4</accession>
<name>RL2_MYCPU</name>
<feature type="chain" id="PRO_0000129586" description="Large ribosomal subunit protein uL2">
    <location>
        <begin position="1"/>
        <end position="281"/>
    </location>
</feature>
<feature type="region of interest" description="Disordered" evidence="2">
    <location>
        <begin position="213"/>
        <end position="281"/>
    </location>
</feature>
<organism>
    <name type="scientific">Mycoplasmopsis pulmonis (strain UAB CTIP)</name>
    <name type="common">Mycoplasma pulmonis</name>
    <dbReference type="NCBI Taxonomy" id="272635"/>
    <lineage>
        <taxon>Bacteria</taxon>
        <taxon>Bacillati</taxon>
        <taxon>Mycoplasmatota</taxon>
        <taxon>Mycoplasmoidales</taxon>
        <taxon>Metamycoplasmataceae</taxon>
        <taxon>Mycoplasmopsis</taxon>
    </lineage>
</organism>
<evidence type="ECO:0000255" key="1">
    <source>
        <dbReference type="HAMAP-Rule" id="MF_01320"/>
    </source>
</evidence>
<evidence type="ECO:0000256" key="2">
    <source>
        <dbReference type="SAM" id="MobiDB-lite"/>
    </source>
</evidence>
<evidence type="ECO:0000305" key="3"/>
<proteinExistence type="inferred from homology"/>
<gene>
    <name evidence="1" type="primary">rplB</name>
    <name type="ordered locus">MYPU_5850</name>
</gene>
<sequence>MAIRKLNPTTNGTRNMSILDYKTNLTGHAPEKSLMKILKKNSGRNNRGVITTRHKGGREKRFYRLVDFKRNKDNIEAIVKTIEYDPNRSANISLVTYLDGEKRYILSPKGIKVGQRIVSGENVDIIVGNSLELANIPEGTNIHNIELQPKGGGILARSAGSYAQILGKEESGKYVLIRLKSGEVRKVFAKCRATIGIVGNEEHSLVNIGKAGRNRHKGIRPTVRGSVMNPIDHPHGGGEGKQPIGRKAPLTPWGKKALGVKTRDNKKSSTKLIIRRRKESK</sequence>
<dbReference type="EMBL" id="AL445565">
    <property type="protein sequence ID" value="CAC13758.1"/>
    <property type="molecule type" value="Genomic_DNA"/>
</dbReference>
<dbReference type="PIR" id="A99585">
    <property type="entry name" value="A99585"/>
</dbReference>
<dbReference type="RefSeq" id="WP_010925386.1">
    <property type="nucleotide sequence ID" value="NC_002771.1"/>
</dbReference>
<dbReference type="SMR" id="Q98PY4"/>
<dbReference type="STRING" id="272635.gene:17577192"/>
<dbReference type="KEGG" id="mpu:MYPU_5850"/>
<dbReference type="eggNOG" id="COG0090">
    <property type="taxonomic scope" value="Bacteria"/>
</dbReference>
<dbReference type="HOGENOM" id="CLU_036235_2_1_14"/>
<dbReference type="BioCyc" id="MPUL272635:G1GT6-597-MONOMER"/>
<dbReference type="Proteomes" id="UP000000528">
    <property type="component" value="Chromosome"/>
</dbReference>
<dbReference type="GO" id="GO:0015934">
    <property type="term" value="C:large ribosomal subunit"/>
    <property type="evidence" value="ECO:0007669"/>
    <property type="project" value="InterPro"/>
</dbReference>
<dbReference type="GO" id="GO:0019843">
    <property type="term" value="F:rRNA binding"/>
    <property type="evidence" value="ECO:0007669"/>
    <property type="project" value="UniProtKB-UniRule"/>
</dbReference>
<dbReference type="GO" id="GO:0003735">
    <property type="term" value="F:structural constituent of ribosome"/>
    <property type="evidence" value="ECO:0007669"/>
    <property type="project" value="InterPro"/>
</dbReference>
<dbReference type="GO" id="GO:0016740">
    <property type="term" value="F:transferase activity"/>
    <property type="evidence" value="ECO:0007669"/>
    <property type="project" value="InterPro"/>
</dbReference>
<dbReference type="GO" id="GO:0002181">
    <property type="term" value="P:cytoplasmic translation"/>
    <property type="evidence" value="ECO:0007669"/>
    <property type="project" value="TreeGrafter"/>
</dbReference>
<dbReference type="FunFam" id="2.30.30.30:FF:000001">
    <property type="entry name" value="50S ribosomal protein L2"/>
    <property type="match status" value="1"/>
</dbReference>
<dbReference type="FunFam" id="2.40.50.140:FF:000003">
    <property type="entry name" value="50S ribosomal protein L2"/>
    <property type="match status" value="1"/>
</dbReference>
<dbReference type="FunFam" id="4.10.950.10:FF:000001">
    <property type="entry name" value="50S ribosomal protein L2"/>
    <property type="match status" value="1"/>
</dbReference>
<dbReference type="Gene3D" id="2.30.30.30">
    <property type="match status" value="1"/>
</dbReference>
<dbReference type="Gene3D" id="2.40.50.140">
    <property type="entry name" value="Nucleic acid-binding proteins"/>
    <property type="match status" value="1"/>
</dbReference>
<dbReference type="Gene3D" id="4.10.950.10">
    <property type="entry name" value="Ribosomal protein L2, domain 3"/>
    <property type="match status" value="1"/>
</dbReference>
<dbReference type="HAMAP" id="MF_01320_B">
    <property type="entry name" value="Ribosomal_uL2_B"/>
    <property type="match status" value="1"/>
</dbReference>
<dbReference type="InterPro" id="IPR012340">
    <property type="entry name" value="NA-bd_OB-fold"/>
</dbReference>
<dbReference type="InterPro" id="IPR014722">
    <property type="entry name" value="Rib_uL2_dom2"/>
</dbReference>
<dbReference type="InterPro" id="IPR002171">
    <property type="entry name" value="Ribosomal_uL2"/>
</dbReference>
<dbReference type="InterPro" id="IPR005880">
    <property type="entry name" value="Ribosomal_uL2_bac/org-type"/>
</dbReference>
<dbReference type="InterPro" id="IPR022669">
    <property type="entry name" value="Ribosomal_uL2_C"/>
</dbReference>
<dbReference type="InterPro" id="IPR022671">
    <property type="entry name" value="Ribosomal_uL2_CS"/>
</dbReference>
<dbReference type="InterPro" id="IPR014726">
    <property type="entry name" value="Ribosomal_uL2_dom3"/>
</dbReference>
<dbReference type="InterPro" id="IPR022666">
    <property type="entry name" value="Ribosomal_uL2_RNA-bd_dom"/>
</dbReference>
<dbReference type="InterPro" id="IPR008991">
    <property type="entry name" value="Translation_prot_SH3-like_sf"/>
</dbReference>
<dbReference type="NCBIfam" id="TIGR01171">
    <property type="entry name" value="rplB_bact"/>
    <property type="match status" value="1"/>
</dbReference>
<dbReference type="PANTHER" id="PTHR13691:SF5">
    <property type="entry name" value="LARGE RIBOSOMAL SUBUNIT PROTEIN UL2M"/>
    <property type="match status" value="1"/>
</dbReference>
<dbReference type="PANTHER" id="PTHR13691">
    <property type="entry name" value="RIBOSOMAL PROTEIN L2"/>
    <property type="match status" value="1"/>
</dbReference>
<dbReference type="Pfam" id="PF00181">
    <property type="entry name" value="Ribosomal_L2"/>
    <property type="match status" value="1"/>
</dbReference>
<dbReference type="Pfam" id="PF03947">
    <property type="entry name" value="Ribosomal_L2_C"/>
    <property type="match status" value="1"/>
</dbReference>
<dbReference type="PIRSF" id="PIRSF002158">
    <property type="entry name" value="Ribosomal_L2"/>
    <property type="match status" value="1"/>
</dbReference>
<dbReference type="SMART" id="SM01383">
    <property type="entry name" value="Ribosomal_L2"/>
    <property type="match status" value="1"/>
</dbReference>
<dbReference type="SMART" id="SM01382">
    <property type="entry name" value="Ribosomal_L2_C"/>
    <property type="match status" value="1"/>
</dbReference>
<dbReference type="SUPFAM" id="SSF50249">
    <property type="entry name" value="Nucleic acid-binding proteins"/>
    <property type="match status" value="1"/>
</dbReference>
<dbReference type="SUPFAM" id="SSF50104">
    <property type="entry name" value="Translation proteins SH3-like domain"/>
    <property type="match status" value="1"/>
</dbReference>
<dbReference type="PROSITE" id="PS00467">
    <property type="entry name" value="RIBOSOMAL_L2"/>
    <property type="match status" value="1"/>
</dbReference>
<protein>
    <recommendedName>
        <fullName evidence="1">Large ribosomal subunit protein uL2</fullName>
    </recommendedName>
    <alternativeName>
        <fullName evidence="3">50S ribosomal protein L2</fullName>
    </alternativeName>
</protein>